<name>ATPD_MESHJ</name>
<keyword id="KW-0066">ATP synthesis</keyword>
<keyword id="KW-1003">Cell membrane</keyword>
<keyword id="KW-0139">CF(1)</keyword>
<keyword id="KW-0375">Hydrogen ion transport</keyword>
<keyword id="KW-0406">Ion transport</keyword>
<keyword id="KW-0472">Membrane</keyword>
<keyword id="KW-0813">Transport</keyword>
<organism>
    <name type="scientific">Mesomycoplasma hyopneumoniae (strain J / ATCC 25934 / NCTC 10110)</name>
    <name type="common">Mycoplasma hyopneumoniae</name>
    <dbReference type="NCBI Taxonomy" id="262719"/>
    <lineage>
        <taxon>Bacteria</taxon>
        <taxon>Bacillati</taxon>
        <taxon>Mycoplasmatota</taxon>
        <taxon>Mycoplasmoidales</taxon>
        <taxon>Metamycoplasmataceae</taxon>
        <taxon>Mesomycoplasma</taxon>
    </lineage>
</organism>
<reference key="1">
    <citation type="journal article" date="2005" name="J. Bacteriol.">
        <title>Swine and poultry pathogens: the complete genome sequences of two strains of Mycoplasma hyopneumoniae and a strain of Mycoplasma synoviae.</title>
        <authorList>
            <person name="Vasconcelos A.T.R."/>
            <person name="Ferreira H.B."/>
            <person name="Bizarro C.V."/>
            <person name="Bonatto S.L."/>
            <person name="Carvalho M.O."/>
            <person name="Pinto P.M."/>
            <person name="Almeida D.F."/>
            <person name="Almeida L.G.P."/>
            <person name="Almeida R."/>
            <person name="Alves-Junior L."/>
            <person name="Assuncao E.N."/>
            <person name="Azevedo V.A.C."/>
            <person name="Bogo M.R."/>
            <person name="Brigido M.M."/>
            <person name="Brocchi M."/>
            <person name="Burity H.A."/>
            <person name="Camargo A.A."/>
            <person name="Camargo S.S."/>
            <person name="Carepo M.S."/>
            <person name="Carraro D.M."/>
            <person name="de Mattos Cascardo J.C."/>
            <person name="Castro L.A."/>
            <person name="Cavalcanti G."/>
            <person name="Chemale G."/>
            <person name="Collevatti R.G."/>
            <person name="Cunha C.W."/>
            <person name="Dallagiovanna B."/>
            <person name="Dambros B.P."/>
            <person name="Dellagostin O.A."/>
            <person name="Falcao C."/>
            <person name="Fantinatti-Garboggini F."/>
            <person name="Felipe M.S.S."/>
            <person name="Fiorentin L."/>
            <person name="Franco G.R."/>
            <person name="Freitas N.S.A."/>
            <person name="Frias D."/>
            <person name="Grangeiro T.B."/>
            <person name="Grisard E.C."/>
            <person name="Guimaraes C.T."/>
            <person name="Hungria M."/>
            <person name="Jardim S.N."/>
            <person name="Krieger M.A."/>
            <person name="Laurino J.P."/>
            <person name="Lima L.F.A."/>
            <person name="Lopes M.I."/>
            <person name="Loreto E.L.S."/>
            <person name="Madeira H.M.F."/>
            <person name="Manfio G.P."/>
            <person name="Maranhao A.Q."/>
            <person name="Martinkovics C.T."/>
            <person name="Medeiros S.R.B."/>
            <person name="Moreira M.A.M."/>
            <person name="Neiva M."/>
            <person name="Ramalho-Neto C.E."/>
            <person name="Nicolas M.F."/>
            <person name="Oliveira S.C."/>
            <person name="Paixao R.F.C."/>
            <person name="Pedrosa F.O."/>
            <person name="Pena S.D.J."/>
            <person name="Pereira M."/>
            <person name="Pereira-Ferrari L."/>
            <person name="Piffer I."/>
            <person name="Pinto L.S."/>
            <person name="Potrich D.P."/>
            <person name="Salim A.C.M."/>
            <person name="Santos F.R."/>
            <person name="Schmitt R."/>
            <person name="Schneider M.P.C."/>
            <person name="Schrank A."/>
            <person name="Schrank I.S."/>
            <person name="Schuck A.F."/>
            <person name="Seuanez H.N."/>
            <person name="Silva D.W."/>
            <person name="Silva R."/>
            <person name="Silva S.C."/>
            <person name="Soares C.M.A."/>
            <person name="Souza K.R.L."/>
            <person name="Souza R.C."/>
            <person name="Staats C.C."/>
            <person name="Steffens M.B.R."/>
            <person name="Teixeira S.M.R."/>
            <person name="Urmenyi T.P."/>
            <person name="Vainstein M.H."/>
            <person name="Zuccherato L.W."/>
            <person name="Simpson A.J.G."/>
            <person name="Zaha A."/>
        </authorList>
    </citation>
    <scope>NUCLEOTIDE SEQUENCE [LARGE SCALE GENOMIC DNA]</scope>
    <source>
        <strain>J / ATCC 25934 / NCTC 10110</strain>
    </source>
</reference>
<sequence length="187" mass="21884">MYLYKKNYYGYAESLLDISISENNVEKYINDCFFILSIIQNNQVLILLFKSHFIGKQEKFNIIDKIFSAKIEKILVNFLKVIAKNNLFLYYKQILLKYIKLANSHLSQTWGEIETAFPISSVMTSSFESILSKKLGKKVHLRHKINSKLISGIRIIVDNQIFENSLFSELKLLKQNLKKHLITKNDL</sequence>
<proteinExistence type="inferred from homology"/>
<gene>
    <name evidence="1" type="primary">atpH</name>
    <name type="ordered locus">MHJ_0046</name>
</gene>
<feature type="chain" id="PRO_1000184757" description="ATP synthase subunit delta">
    <location>
        <begin position="1"/>
        <end position="187"/>
    </location>
</feature>
<evidence type="ECO:0000255" key="1">
    <source>
        <dbReference type="HAMAP-Rule" id="MF_01416"/>
    </source>
</evidence>
<dbReference type="EMBL" id="AE017243">
    <property type="protein sequence ID" value="AAZ44140.2"/>
    <property type="molecule type" value="Genomic_DNA"/>
</dbReference>
<dbReference type="RefSeq" id="WP_014579552.1">
    <property type="nucleotide sequence ID" value="NC_007295.1"/>
</dbReference>
<dbReference type="SMR" id="Q4AAW0"/>
<dbReference type="GeneID" id="41334334"/>
<dbReference type="KEGG" id="mhj:MHJ_0046"/>
<dbReference type="eggNOG" id="COG0712">
    <property type="taxonomic scope" value="Bacteria"/>
</dbReference>
<dbReference type="HOGENOM" id="CLU_085114_4_2_14"/>
<dbReference type="OrthoDB" id="400380at2"/>
<dbReference type="Proteomes" id="UP000000548">
    <property type="component" value="Chromosome"/>
</dbReference>
<dbReference type="GO" id="GO:0005886">
    <property type="term" value="C:plasma membrane"/>
    <property type="evidence" value="ECO:0007669"/>
    <property type="project" value="UniProtKB-SubCell"/>
</dbReference>
<dbReference type="GO" id="GO:0045259">
    <property type="term" value="C:proton-transporting ATP synthase complex"/>
    <property type="evidence" value="ECO:0007669"/>
    <property type="project" value="UniProtKB-KW"/>
</dbReference>
<dbReference type="GO" id="GO:0046933">
    <property type="term" value="F:proton-transporting ATP synthase activity, rotational mechanism"/>
    <property type="evidence" value="ECO:0007669"/>
    <property type="project" value="UniProtKB-UniRule"/>
</dbReference>
<dbReference type="Gene3D" id="1.10.520.20">
    <property type="entry name" value="N-terminal domain of the delta subunit of the F1F0-ATP synthase"/>
    <property type="match status" value="1"/>
</dbReference>
<dbReference type="HAMAP" id="MF_01416">
    <property type="entry name" value="ATP_synth_delta_bact"/>
    <property type="match status" value="1"/>
</dbReference>
<dbReference type="InterPro" id="IPR026015">
    <property type="entry name" value="ATP_synth_OSCP/delta_N_sf"/>
</dbReference>
<dbReference type="InterPro" id="IPR000711">
    <property type="entry name" value="ATPase_OSCP/dsu"/>
</dbReference>
<dbReference type="NCBIfam" id="TIGR01145">
    <property type="entry name" value="ATP_synt_delta"/>
    <property type="match status" value="1"/>
</dbReference>
<dbReference type="NCBIfam" id="NF009975">
    <property type="entry name" value="PRK13436.1"/>
    <property type="match status" value="1"/>
</dbReference>
<dbReference type="PANTHER" id="PTHR11910">
    <property type="entry name" value="ATP SYNTHASE DELTA CHAIN"/>
    <property type="match status" value="1"/>
</dbReference>
<dbReference type="Pfam" id="PF00213">
    <property type="entry name" value="OSCP"/>
    <property type="match status" value="1"/>
</dbReference>
<dbReference type="PRINTS" id="PR00125">
    <property type="entry name" value="ATPASEDELTA"/>
</dbReference>
<dbReference type="SUPFAM" id="SSF47928">
    <property type="entry name" value="N-terminal domain of the delta subunit of the F1F0-ATP synthase"/>
    <property type="match status" value="1"/>
</dbReference>
<accession>Q4AAW0</accession>
<comment type="function">
    <text evidence="1">F(1)F(0) ATP synthase produces ATP from ADP in the presence of a proton or sodium gradient. F-type ATPases consist of two structural domains, F(1) containing the extramembraneous catalytic core and F(0) containing the membrane proton channel, linked together by a central stalk and a peripheral stalk. During catalysis, ATP synthesis in the catalytic domain of F(1) is coupled via a rotary mechanism of the central stalk subunits to proton translocation.</text>
</comment>
<comment type="function">
    <text evidence="1">This protein is part of the stalk that links CF(0) to CF(1). It either transmits conformational changes from CF(0) to CF(1) or is implicated in proton conduction.</text>
</comment>
<comment type="subunit">
    <text evidence="1">F-type ATPases have 2 components, F(1) - the catalytic core - and F(0) - the membrane proton channel. F(1) has five subunits: alpha(3), beta(3), gamma(1), delta(1), epsilon(1). F(0) has three main subunits: a(1), b(2) and c(10-14). The alpha and beta chains form an alternating ring which encloses part of the gamma chain. F(1) is attached to F(0) by a central stalk formed by the gamma and epsilon chains, while a peripheral stalk is formed by the delta and b chains.</text>
</comment>
<comment type="subcellular location">
    <subcellularLocation>
        <location evidence="1">Cell membrane</location>
        <topology evidence="1">Peripheral membrane protein</topology>
    </subcellularLocation>
</comment>
<comment type="similarity">
    <text evidence="1">Belongs to the ATPase delta chain family.</text>
</comment>
<protein>
    <recommendedName>
        <fullName evidence="1">ATP synthase subunit delta</fullName>
    </recommendedName>
    <alternativeName>
        <fullName evidence="1">ATP synthase F(1) sector subunit delta</fullName>
    </alternativeName>
    <alternativeName>
        <fullName evidence="1">F-type ATPase subunit delta</fullName>
        <shortName evidence="1">F-ATPase subunit delta</shortName>
    </alternativeName>
</protein>